<evidence type="ECO:0000250" key="1"/>
<evidence type="ECO:0000255" key="2">
    <source>
        <dbReference type="PROSITE-ProRule" id="PRU10058"/>
    </source>
</evidence>
<evidence type="ECO:0000269" key="3">
    <source ref="1"/>
</evidence>
<evidence type="ECO:0000305" key="4"/>
<protein>
    <recommendedName>
        <fullName>Endoglucanase</fullName>
        <ecNumber>3.2.1.4</ecNumber>
    </recommendedName>
    <alternativeName>
        <fullName>Cellulase</fullName>
    </alternativeName>
    <alternativeName>
        <fullName>Endo-1,4-beta-glucanase</fullName>
    </alternativeName>
</protein>
<name>GUN_CELUD</name>
<comment type="function">
    <text>The biological conversion of cellulose to glucose generally requires three types of hydrolytic enzymes: (1) Endoglucanases which cut internal beta-1,4-glucosidic bonds; (2) Exocellobiohydrolases that cut the disaccharide cellobiose from the non-reducing end of the cellulose polymer chain; (3) Beta-1,4-glucosidases which hydrolyze the cellobiose and other short cello-oligosaccharides to glucose.</text>
</comment>
<comment type="catalytic activity">
    <reaction>
        <text>Endohydrolysis of (1-&gt;4)-beta-D-glucosidic linkages in cellulose, lichenin and cereal beta-D-glucans.</text>
        <dbReference type="EC" id="3.2.1.4"/>
    </reaction>
</comment>
<comment type="similarity">
    <text evidence="4">Belongs to the glycosyl hydrolase 8 (cellulase D) family.</text>
</comment>
<dbReference type="EC" id="3.2.1.4"/>
<dbReference type="EMBL" id="M36503">
    <property type="protein sequence ID" value="AAA23090.1"/>
    <property type="molecule type" value="Genomic_DNA"/>
</dbReference>
<dbReference type="PIR" id="I40696">
    <property type="entry name" value="I40696"/>
</dbReference>
<dbReference type="SMR" id="P18336"/>
<dbReference type="CAZy" id="GH8">
    <property type="family name" value="Glycoside Hydrolase Family 8"/>
</dbReference>
<dbReference type="GO" id="GO:0008810">
    <property type="term" value="F:cellulase activity"/>
    <property type="evidence" value="ECO:0007669"/>
    <property type="project" value="UniProtKB-EC"/>
</dbReference>
<dbReference type="GO" id="GO:0030245">
    <property type="term" value="P:cellulose catabolic process"/>
    <property type="evidence" value="ECO:0007669"/>
    <property type="project" value="UniProtKB-KW"/>
</dbReference>
<dbReference type="Gene3D" id="1.50.10.10">
    <property type="match status" value="1"/>
</dbReference>
<dbReference type="InterPro" id="IPR008928">
    <property type="entry name" value="6-hairpin_glycosidase_sf"/>
</dbReference>
<dbReference type="InterPro" id="IPR012341">
    <property type="entry name" value="6hp_glycosidase-like_sf"/>
</dbReference>
<dbReference type="InterPro" id="IPR002037">
    <property type="entry name" value="Glyco_hydro_8"/>
</dbReference>
<dbReference type="InterPro" id="IPR019834">
    <property type="entry name" value="Glyco_hydro_8_CS"/>
</dbReference>
<dbReference type="Pfam" id="PF01270">
    <property type="entry name" value="Glyco_hydro_8"/>
    <property type="match status" value="1"/>
</dbReference>
<dbReference type="PRINTS" id="PR00735">
    <property type="entry name" value="GLHYDRLASE8"/>
</dbReference>
<dbReference type="SUPFAM" id="SSF48208">
    <property type="entry name" value="Six-hairpin glycosidases"/>
    <property type="match status" value="1"/>
</dbReference>
<dbReference type="PROSITE" id="PS00812">
    <property type="entry name" value="GLYCOSYL_HYDROL_F8"/>
    <property type="match status" value="1"/>
</dbReference>
<proteinExistence type="evidence at protein level"/>
<sequence length="359" mass="40690">MPLRALVAVIVTTAVMLVPRAWAQTAWERYKARFMMPDARIIDTANGNVSHTEGQGFAMLLAVANNDRPAFDKLWQWTDSTLRDKSNGLFYWRYNPVAPDPIADKNNATDGDTLIAWALLRAQKQWQDKRYATASDAITASLLKYTVVTFAGRQVMLPGVKGFNRNDHLNLNPSYFIFPAWRAFAERTHLTAWRTLQSDGQALLGQMGWGKSHLPSDWVALRADGKMLPAKEWPPRMSFDAIRIPLYISWVDPHSALLAPWKAWMQSYPRLQTPAWINVSTNEVAPWNMAGGLLAVRDLTLGEPLERRRLTTRMIITPPASSCWSGWRNRISASAVMALQVSQPVCLRAERKEQERLTM</sequence>
<accession>P18336</accession>
<reference key="1">
    <citation type="journal article" date="1986" name="J. Biotechnol.">
        <title>Sequence of a cellulase gene of Cellulomonas uda CB4.</title>
        <authorList>
            <person name="Nakamura K."/>
            <person name="Misawa N."/>
            <person name="Kitamura K."/>
        </authorList>
    </citation>
    <scope>NUCLEOTIDE SEQUENCE [GENOMIC DNA]</scope>
    <scope>PROTEIN SEQUENCE OF 24-37</scope>
    <source>
        <strain>CB4</strain>
    </source>
</reference>
<feature type="signal peptide" evidence="3">
    <location>
        <begin position="1"/>
        <end position="23"/>
    </location>
</feature>
<feature type="chain" id="PRO_0000007933" description="Endoglucanase">
    <location>
        <begin position="24"/>
        <end position="359"/>
    </location>
</feature>
<feature type="active site" description="Proton donor" evidence="1">
    <location>
        <position position="53"/>
    </location>
</feature>
<feature type="active site" description="Nucleophile" evidence="2">
    <location>
        <position position="110"/>
    </location>
</feature>
<keyword id="KW-0119">Carbohydrate metabolism</keyword>
<keyword id="KW-0136">Cellulose degradation</keyword>
<keyword id="KW-0903">Direct protein sequencing</keyword>
<keyword id="KW-0326">Glycosidase</keyword>
<keyword id="KW-0378">Hydrolase</keyword>
<keyword id="KW-0624">Polysaccharide degradation</keyword>
<keyword id="KW-0732">Signal</keyword>
<organism>
    <name type="scientific">Cellulomonas uda</name>
    <dbReference type="NCBI Taxonomy" id="1714"/>
    <lineage>
        <taxon>Bacteria</taxon>
        <taxon>Bacillati</taxon>
        <taxon>Actinomycetota</taxon>
        <taxon>Actinomycetes</taxon>
        <taxon>Micrococcales</taxon>
        <taxon>Cellulomonadaceae</taxon>
        <taxon>Cellulomonas</taxon>
    </lineage>
</organism>